<organism>
    <name type="scientific">Cereibacter sphaeroides (strain ATCC 17029 / ATH 2.4.9)</name>
    <name type="common">Rhodobacter sphaeroides</name>
    <dbReference type="NCBI Taxonomy" id="349101"/>
    <lineage>
        <taxon>Bacteria</taxon>
        <taxon>Pseudomonadati</taxon>
        <taxon>Pseudomonadota</taxon>
        <taxon>Alphaproteobacteria</taxon>
        <taxon>Rhodobacterales</taxon>
        <taxon>Paracoccaceae</taxon>
        <taxon>Cereibacter</taxon>
    </lineage>
</organism>
<feature type="chain" id="PRO_1000001460" description="Holliday junction branch migration complex subunit RuvB">
    <location>
        <begin position="1"/>
        <end position="341"/>
    </location>
</feature>
<feature type="region of interest" description="Large ATPase domain (RuvB-L)" evidence="1">
    <location>
        <begin position="1"/>
        <end position="182"/>
    </location>
</feature>
<feature type="region of interest" description="Small ATPAse domain (RuvB-S)" evidence="1">
    <location>
        <begin position="183"/>
        <end position="253"/>
    </location>
</feature>
<feature type="region of interest" description="Head domain (RuvB-H)" evidence="1">
    <location>
        <begin position="256"/>
        <end position="341"/>
    </location>
</feature>
<feature type="binding site" evidence="1">
    <location>
        <position position="21"/>
    </location>
    <ligand>
        <name>ATP</name>
        <dbReference type="ChEBI" id="CHEBI:30616"/>
    </ligand>
</feature>
<feature type="binding site" evidence="1">
    <location>
        <position position="22"/>
    </location>
    <ligand>
        <name>ATP</name>
        <dbReference type="ChEBI" id="CHEBI:30616"/>
    </ligand>
</feature>
<feature type="binding site" evidence="1">
    <location>
        <position position="63"/>
    </location>
    <ligand>
        <name>ATP</name>
        <dbReference type="ChEBI" id="CHEBI:30616"/>
    </ligand>
</feature>
<feature type="binding site" evidence="1">
    <location>
        <position position="66"/>
    </location>
    <ligand>
        <name>ATP</name>
        <dbReference type="ChEBI" id="CHEBI:30616"/>
    </ligand>
</feature>
<feature type="binding site" evidence="1">
    <location>
        <position position="67"/>
    </location>
    <ligand>
        <name>ATP</name>
        <dbReference type="ChEBI" id="CHEBI:30616"/>
    </ligand>
</feature>
<feature type="binding site" evidence="1">
    <location>
        <position position="67"/>
    </location>
    <ligand>
        <name>Mg(2+)</name>
        <dbReference type="ChEBI" id="CHEBI:18420"/>
    </ligand>
</feature>
<feature type="binding site" evidence="1">
    <location>
        <position position="68"/>
    </location>
    <ligand>
        <name>ATP</name>
        <dbReference type="ChEBI" id="CHEBI:30616"/>
    </ligand>
</feature>
<feature type="binding site" evidence="1">
    <location>
        <begin position="129"/>
        <end position="131"/>
    </location>
    <ligand>
        <name>ATP</name>
        <dbReference type="ChEBI" id="CHEBI:30616"/>
    </ligand>
</feature>
<feature type="binding site" evidence="1">
    <location>
        <position position="172"/>
    </location>
    <ligand>
        <name>ATP</name>
        <dbReference type="ChEBI" id="CHEBI:30616"/>
    </ligand>
</feature>
<feature type="binding site" evidence="1">
    <location>
        <position position="182"/>
    </location>
    <ligand>
        <name>ATP</name>
        <dbReference type="ChEBI" id="CHEBI:30616"/>
    </ligand>
</feature>
<feature type="binding site" evidence="1">
    <location>
        <position position="219"/>
    </location>
    <ligand>
        <name>ATP</name>
        <dbReference type="ChEBI" id="CHEBI:30616"/>
    </ligand>
</feature>
<feature type="binding site" evidence="1">
    <location>
        <position position="292"/>
    </location>
    <ligand>
        <name>DNA</name>
        <dbReference type="ChEBI" id="CHEBI:16991"/>
    </ligand>
</feature>
<feature type="binding site" evidence="1">
    <location>
        <position position="311"/>
    </location>
    <ligand>
        <name>DNA</name>
        <dbReference type="ChEBI" id="CHEBI:16991"/>
    </ligand>
</feature>
<feature type="binding site" evidence="1">
    <location>
        <position position="316"/>
    </location>
    <ligand>
        <name>DNA</name>
        <dbReference type="ChEBI" id="CHEBI:16991"/>
    </ligand>
</feature>
<sequence>MTSSDPTLRPERLPEDMDRALRPQSLEEFVGQAEARANLRVFIESARMRGEAMDHTLFHGPPGLGKTTLAQIMARELGVGFRMTSGPVLAKPGDLAAILTNLEPRDVLFIDEIHRLSPVVEEVLYPALEDFALDLVIGEGPAARTVRIDLQPFTLVGATTRLGLLTTPLRDRFGIPTRLQFYTEDELDLIVARGARMMGVDSDPEGTREIARRARGTPRIAGRLLRRVVDFALVEGDGRLTQAIADRALTRLGVDHLGLDLGDRRYIGLIAENYGGGPVGIETIAAALSESRDAVEEVIEPYLLQQGLIQRTPRGRMLAHKAWRHMGIEPPKGPGQSDLFG</sequence>
<protein>
    <recommendedName>
        <fullName evidence="1">Holliday junction branch migration complex subunit RuvB</fullName>
        <ecNumber evidence="1">3.6.4.-</ecNumber>
    </recommendedName>
</protein>
<reference key="1">
    <citation type="submission" date="2007-02" db="EMBL/GenBank/DDBJ databases">
        <title>Complete sequence of chromosome 1 of Rhodobacter sphaeroides ATCC 17029.</title>
        <authorList>
            <person name="Copeland A."/>
            <person name="Lucas S."/>
            <person name="Lapidus A."/>
            <person name="Barry K."/>
            <person name="Detter J.C."/>
            <person name="Glavina del Rio T."/>
            <person name="Hammon N."/>
            <person name="Israni S."/>
            <person name="Dalin E."/>
            <person name="Tice H."/>
            <person name="Pitluck S."/>
            <person name="Kiss H."/>
            <person name="Brettin T."/>
            <person name="Bruce D."/>
            <person name="Han C."/>
            <person name="Tapia R."/>
            <person name="Gilna P."/>
            <person name="Schmutz J."/>
            <person name="Larimer F."/>
            <person name="Land M."/>
            <person name="Hauser L."/>
            <person name="Kyrpides N."/>
            <person name="Mikhailova N."/>
            <person name="Richardson P."/>
            <person name="Mackenzie C."/>
            <person name="Choudhary M."/>
            <person name="Donohue T.J."/>
            <person name="Kaplan S."/>
        </authorList>
    </citation>
    <scope>NUCLEOTIDE SEQUENCE [LARGE SCALE GENOMIC DNA]</scope>
    <source>
        <strain>ATCC 17029 / ATH 2.4.9</strain>
    </source>
</reference>
<accession>A3PLU2</accession>
<proteinExistence type="inferred from homology"/>
<keyword id="KW-0067">ATP-binding</keyword>
<keyword id="KW-0963">Cytoplasm</keyword>
<keyword id="KW-0227">DNA damage</keyword>
<keyword id="KW-0233">DNA recombination</keyword>
<keyword id="KW-0234">DNA repair</keyword>
<keyword id="KW-0238">DNA-binding</keyword>
<keyword id="KW-0378">Hydrolase</keyword>
<keyword id="KW-0547">Nucleotide-binding</keyword>
<evidence type="ECO:0000255" key="1">
    <source>
        <dbReference type="HAMAP-Rule" id="MF_00016"/>
    </source>
</evidence>
<name>RUVB_CERS1</name>
<comment type="function">
    <text evidence="1">The RuvA-RuvB-RuvC complex processes Holliday junction (HJ) DNA during genetic recombination and DNA repair, while the RuvA-RuvB complex plays an important role in the rescue of blocked DNA replication forks via replication fork reversal (RFR). RuvA specifically binds to HJ cruciform DNA, conferring on it an open structure. The RuvB hexamer acts as an ATP-dependent pump, pulling dsDNA into and through the RuvAB complex. RuvB forms 2 homohexamers on either side of HJ DNA bound by 1 or 2 RuvA tetramers; 4 subunits per hexamer contact DNA at a time. Coordinated motions by a converter formed by DNA-disengaged RuvB subunits stimulates ATP hydrolysis and nucleotide exchange. Immobilization of the converter enables RuvB to convert the ATP-contained energy into a lever motion, pulling 2 nucleotides of DNA out of the RuvA tetramer per ATP hydrolyzed, thus driving DNA branch migration. The RuvB motors rotate together with the DNA substrate, which together with the progressing nucleotide cycle form the mechanistic basis for DNA recombination by continuous HJ branch migration. Branch migration allows RuvC to scan DNA until it finds its consensus sequence, where it cleaves and resolves cruciform DNA.</text>
</comment>
<comment type="catalytic activity">
    <reaction evidence="1">
        <text>ATP + H2O = ADP + phosphate + H(+)</text>
        <dbReference type="Rhea" id="RHEA:13065"/>
        <dbReference type="ChEBI" id="CHEBI:15377"/>
        <dbReference type="ChEBI" id="CHEBI:15378"/>
        <dbReference type="ChEBI" id="CHEBI:30616"/>
        <dbReference type="ChEBI" id="CHEBI:43474"/>
        <dbReference type="ChEBI" id="CHEBI:456216"/>
    </reaction>
</comment>
<comment type="subunit">
    <text evidence="1">Homohexamer. Forms an RuvA(8)-RuvB(12)-Holliday junction (HJ) complex. HJ DNA is sandwiched between 2 RuvA tetramers; dsDNA enters through RuvA and exits via RuvB. An RuvB hexamer assembles on each DNA strand where it exits the tetramer. Each RuvB hexamer is contacted by two RuvA subunits (via domain III) on 2 adjacent RuvB subunits; this complex drives branch migration. In the full resolvosome a probable DNA-RuvA(4)-RuvB(12)-RuvC(2) complex forms which resolves the HJ.</text>
</comment>
<comment type="subcellular location">
    <subcellularLocation>
        <location evidence="1">Cytoplasm</location>
    </subcellularLocation>
</comment>
<comment type="domain">
    <text evidence="1">Has 3 domains, the large (RuvB-L) and small ATPase (RuvB-S) domains and the C-terminal head (RuvB-H) domain. The head domain binds DNA, while the ATPase domains jointly bind ATP, ADP or are empty depending on the state of the subunit in the translocation cycle. During a single DNA translocation step the structure of each domain remains the same, but their relative positions change.</text>
</comment>
<comment type="similarity">
    <text evidence="1">Belongs to the RuvB family.</text>
</comment>
<dbReference type="EC" id="3.6.4.-" evidence="1"/>
<dbReference type="EMBL" id="CP000577">
    <property type="protein sequence ID" value="ABN77308.1"/>
    <property type="molecule type" value="Genomic_DNA"/>
</dbReference>
<dbReference type="RefSeq" id="WP_011338313.1">
    <property type="nucleotide sequence ID" value="NC_009049.1"/>
</dbReference>
<dbReference type="SMR" id="A3PLU2"/>
<dbReference type="GeneID" id="67447287"/>
<dbReference type="KEGG" id="rsh:Rsph17029_2205"/>
<dbReference type="HOGENOM" id="CLU_055599_1_0_5"/>
<dbReference type="GO" id="GO:0005737">
    <property type="term" value="C:cytoplasm"/>
    <property type="evidence" value="ECO:0007669"/>
    <property type="project" value="UniProtKB-SubCell"/>
</dbReference>
<dbReference type="GO" id="GO:0048476">
    <property type="term" value="C:Holliday junction resolvase complex"/>
    <property type="evidence" value="ECO:0007669"/>
    <property type="project" value="UniProtKB-UniRule"/>
</dbReference>
<dbReference type="GO" id="GO:0005524">
    <property type="term" value="F:ATP binding"/>
    <property type="evidence" value="ECO:0007669"/>
    <property type="project" value="UniProtKB-UniRule"/>
</dbReference>
<dbReference type="GO" id="GO:0016887">
    <property type="term" value="F:ATP hydrolysis activity"/>
    <property type="evidence" value="ECO:0007669"/>
    <property type="project" value="InterPro"/>
</dbReference>
<dbReference type="GO" id="GO:0000400">
    <property type="term" value="F:four-way junction DNA binding"/>
    <property type="evidence" value="ECO:0007669"/>
    <property type="project" value="UniProtKB-UniRule"/>
</dbReference>
<dbReference type="GO" id="GO:0009378">
    <property type="term" value="F:four-way junction helicase activity"/>
    <property type="evidence" value="ECO:0007669"/>
    <property type="project" value="InterPro"/>
</dbReference>
<dbReference type="GO" id="GO:0006310">
    <property type="term" value="P:DNA recombination"/>
    <property type="evidence" value="ECO:0007669"/>
    <property type="project" value="UniProtKB-UniRule"/>
</dbReference>
<dbReference type="GO" id="GO:0006281">
    <property type="term" value="P:DNA repair"/>
    <property type="evidence" value="ECO:0007669"/>
    <property type="project" value="UniProtKB-UniRule"/>
</dbReference>
<dbReference type="CDD" id="cd00009">
    <property type="entry name" value="AAA"/>
    <property type="match status" value="1"/>
</dbReference>
<dbReference type="Gene3D" id="1.10.8.60">
    <property type="match status" value="1"/>
</dbReference>
<dbReference type="Gene3D" id="3.40.50.300">
    <property type="entry name" value="P-loop containing nucleotide triphosphate hydrolases"/>
    <property type="match status" value="1"/>
</dbReference>
<dbReference type="Gene3D" id="1.10.10.10">
    <property type="entry name" value="Winged helix-like DNA-binding domain superfamily/Winged helix DNA-binding domain"/>
    <property type="match status" value="1"/>
</dbReference>
<dbReference type="HAMAP" id="MF_00016">
    <property type="entry name" value="DNA_HJ_migration_RuvB"/>
    <property type="match status" value="1"/>
</dbReference>
<dbReference type="InterPro" id="IPR003593">
    <property type="entry name" value="AAA+_ATPase"/>
</dbReference>
<dbReference type="InterPro" id="IPR041445">
    <property type="entry name" value="AAA_lid_4"/>
</dbReference>
<dbReference type="InterPro" id="IPR004605">
    <property type="entry name" value="DNA_helicase_Holl-junc_RuvB"/>
</dbReference>
<dbReference type="InterPro" id="IPR027417">
    <property type="entry name" value="P-loop_NTPase"/>
</dbReference>
<dbReference type="InterPro" id="IPR008824">
    <property type="entry name" value="RuvB-like_N"/>
</dbReference>
<dbReference type="InterPro" id="IPR008823">
    <property type="entry name" value="RuvB_C"/>
</dbReference>
<dbReference type="InterPro" id="IPR036388">
    <property type="entry name" value="WH-like_DNA-bd_sf"/>
</dbReference>
<dbReference type="InterPro" id="IPR036390">
    <property type="entry name" value="WH_DNA-bd_sf"/>
</dbReference>
<dbReference type="NCBIfam" id="NF000868">
    <property type="entry name" value="PRK00080.1"/>
    <property type="match status" value="1"/>
</dbReference>
<dbReference type="NCBIfam" id="TIGR00635">
    <property type="entry name" value="ruvB"/>
    <property type="match status" value="1"/>
</dbReference>
<dbReference type="PANTHER" id="PTHR42848">
    <property type="match status" value="1"/>
</dbReference>
<dbReference type="PANTHER" id="PTHR42848:SF1">
    <property type="entry name" value="HOLLIDAY JUNCTION BRANCH MIGRATION COMPLEX SUBUNIT RUVB"/>
    <property type="match status" value="1"/>
</dbReference>
<dbReference type="Pfam" id="PF17864">
    <property type="entry name" value="AAA_lid_4"/>
    <property type="match status" value="1"/>
</dbReference>
<dbReference type="Pfam" id="PF05491">
    <property type="entry name" value="RuvB_C"/>
    <property type="match status" value="1"/>
</dbReference>
<dbReference type="Pfam" id="PF05496">
    <property type="entry name" value="RuvB_N"/>
    <property type="match status" value="1"/>
</dbReference>
<dbReference type="SMART" id="SM00382">
    <property type="entry name" value="AAA"/>
    <property type="match status" value="1"/>
</dbReference>
<dbReference type="SUPFAM" id="SSF52540">
    <property type="entry name" value="P-loop containing nucleoside triphosphate hydrolases"/>
    <property type="match status" value="1"/>
</dbReference>
<dbReference type="SUPFAM" id="SSF46785">
    <property type="entry name" value="Winged helix' DNA-binding domain"/>
    <property type="match status" value="1"/>
</dbReference>
<gene>
    <name evidence="1" type="primary">ruvB</name>
    <name type="ordered locus">Rsph17029_2205</name>
</gene>